<name>PCP_STAHJ</name>
<sequence>MKILVTAFDPFGGEKINPALEAVKQLENTIGEHTISKLEIPTVFHESKDVIDKELANGNYDVVLSIGQAGGRYDLTPERVGINIDDARIPDNKGNQPIDVAIQEDGAPAYFSNLPVKTMTEAIKAAGVPASLSNTAGTFVCNHVLYQLGYLADKSYPGLLFGFIHVPFIPEQVTDKPEKPSMSIETIAKGLTAAIKAISKEDDAKVALGETH</sequence>
<proteinExistence type="inferred from homology"/>
<feature type="chain" id="PRO_1000050141" description="Pyrrolidone-carboxylate peptidase">
    <location>
        <begin position="1"/>
        <end position="212"/>
    </location>
</feature>
<feature type="active site" evidence="1">
    <location>
        <position position="78"/>
    </location>
</feature>
<feature type="active site" evidence="1">
    <location>
        <position position="141"/>
    </location>
</feature>
<feature type="active site" evidence="1">
    <location>
        <position position="165"/>
    </location>
</feature>
<keyword id="KW-0963">Cytoplasm</keyword>
<keyword id="KW-0378">Hydrolase</keyword>
<keyword id="KW-0645">Protease</keyword>
<keyword id="KW-0788">Thiol protease</keyword>
<comment type="function">
    <text evidence="1">Removes 5-oxoproline from various penultimate amino acid residues except L-proline.</text>
</comment>
<comment type="catalytic activity">
    <reaction evidence="1">
        <text>Release of an N-terminal pyroglutamyl group from a polypeptide, the second amino acid generally not being Pro.</text>
        <dbReference type="EC" id="3.4.19.3"/>
    </reaction>
</comment>
<comment type="subunit">
    <text evidence="1">Homotetramer.</text>
</comment>
<comment type="subcellular location">
    <subcellularLocation>
        <location evidence="1">Cytoplasm</location>
    </subcellularLocation>
</comment>
<comment type="similarity">
    <text evidence="1">Belongs to the peptidase C15 family.</text>
</comment>
<reference key="1">
    <citation type="journal article" date="2005" name="J. Bacteriol.">
        <title>Whole-genome sequencing of Staphylococcus haemolyticus uncovers the extreme plasticity of its genome and the evolution of human-colonizing staphylococcal species.</title>
        <authorList>
            <person name="Takeuchi F."/>
            <person name="Watanabe S."/>
            <person name="Baba T."/>
            <person name="Yuzawa H."/>
            <person name="Ito T."/>
            <person name="Morimoto Y."/>
            <person name="Kuroda M."/>
            <person name="Cui L."/>
            <person name="Takahashi M."/>
            <person name="Ankai A."/>
            <person name="Baba S."/>
            <person name="Fukui S."/>
            <person name="Lee J.C."/>
            <person name="Hiramatsu K."/>
        </authorList>
    </citation>
    <scope>NUCLEOTIDE SEQUENCE [LARGE SCALE GENOMIC DNA]</scope>
    <source>
        <strain>JCSC1435</strain>
    </source>
</reference>
<evidence type="ECO:0000255" key="1">
    <source>
        <dbReference type="HAMAP-Rule" id="MF_00417"/>
    </source>
</evidence>
<organism>
    <name type="scientific">Staphylococcus haemolyticus (strain JCSC1435)</name>
    <dbReference type="NCBI Taxonomy" id="279808"/>
    <lineage>
        <taxon>Bacteria</taxon>
        <taxon>Bacillati</taxon>
        <taxon>Bacillota</taxon>
        <taxon>Bacilli</taxon>
        <taxon>Bacillales</taxon>
        <taxon>Staphylococcaceae</taxon>
        <taxon>Staphylococcus</taxon>
    </lineage>
</organism>
<gene>
    <name evidence="1" type="primary">pcp</name>
    <name type="ordered locus">SH0293</name>
</gene>
<dbReference type="EC" id="3.4.19.3" evidence="1"/>
<dbReference type="EMBL" id="AP006716">
    <property type="protein sequence ID" value="BAE03602.1"/>
    <property type="molecule type" value="Genomic_DNA"/>
</dbReference>
<dbReference type="RefSeq" id="WP_011274622.1">
    <property type="nucleotide sequence ID" value="NC_007168.1"/>
</dbReference>
<dbReference type="SMR" id="Q4L9S3"/>
<dbReference type="MEROPS" id="C15.001"/>
<dbReference type="GeneID" id="93779717"/>
<dbReference type="KEGG" id="sha:SH0293"/>
<dbReference type="eggNOG" id="COG2039">
    <property type="taxonomic scope" value="Bacteria"/>
</dbReference>
<dbReference type="HOGENOM" id="CLU_043960_4_0_9"/>
<dbReference type="OrthoDB" id="9779738at2"/>
<dbReference type="Proteomes" id="UP000000543">
    <property type="component" value="Chromosome"/>
</dbReference>
<dbReference type="GO" id="GO:0005829">
    <property type="term" value="C:cytosol"/>
    <property type="evidence" value="ECO:0007669"/>
    <property type="project" value="InterPro"/>
</dbReference>
<dbReference type="GO" id="GO:0016920">
    <property type="term" value="F:pyroglutamyl-peptidase activity"/>
    <property type="evidence" value="ECO:0007669"/>
    <property type="project" value="UniProtKB-UniRule"/>
</dbReference>
<dbReference type="GO" id="GO:0006508">
    <property type="term" value="P:proteolysis"/>
    <property type="evidence" value="ECO:0007669"/>
    <property type="project" value="UniProtKB-KW"/>
</dbReference>
<dbReference type="CDD" id="cd00501">
    <property type="entry name" value="Peptidase_C15"/>
    <property type="match status" value="1"/>
</dbReference>
<dbReference type="FunFam" id="3.40.630.20:FF:000001">
    <property type="entry name" value="Pyrrolidone-carboxylate peptidase"/>
    <property type="match status" value="1"/>
</dbReference>
<dbReference type="Gene3D" id="3.40.630.20">
    <property type="entry name" value="Peptidase C15, pyroglutamyl peptidase I-like"/>
    <property type="match status" value="1"/>
</dbReference>
<dbReference type="HAMAP" id="MF_00417">
    <property type="entry name" value="Pyrrolid_peptidase"/>
    <property type="match status" value="1"/>
</dbReference>
<dbReference type="InterPro" id="IPR000816">
    <property type="entry name" value="Peptidase_C15"/>
</dbReference>
<dbReference type="InterPro" id="IPR016125">
    <property type="entry name" value="Peptidase_C15-like"/>
</dbReference>
<dbReference type="InterPro" id="IPR036440">
    <property type="entry name" value="Peptidase_C15-like_sf"/>
</dbReference>
<dbReference type="InterPro" id="IPR029762">
    <property type="entry name" value="PGP-I_bact-type"/>
</dbReference>
<dbReference type="InterPro" id="IPR033694">
    <property type="entry name" value="PGPEP1_Cys_AS"/>
</dbReference>
<dbReference type="InterPro" id="IPR033693">
    <property type="entry name" value="PGPEP1_Glu_AS"/>
</dbReference>
<dbReference type="NCBIfam" id="NF009676">
    <property type="entry name" value="PRK13197.1"/>
    <property type="match status" value="1"/>
</dbReference>
<dbReference type="NCBIfam" id="TIGR00504">
    <property type="entry name" value="pyro_pdase"/>
    <property type="match status" value="1"/>
</dbReference>
<dbReference type="PANTHER" id="PTHR23402">
    <property type="entry name" value="PROTEASE FAMILY C15 PYROGLUTAMYL-PEPTIDASE I-RELATED"/>
    <property type="match status" value="1"/>
</dbReference>
<dbReference type="PANTHER" id="PTHR23402:SF1">
    <property type="entry name" value="PYROGLUTAMYL-PEPTIDASE I"/>
    <property type="match status" value="1"/>
</dbReference>
<dbReference type="Pfam" id="PF01470">
    <property type="entry name" value="Peptidase_C15"/>
    <property type="match status" value="1"/>
</dbReference>
<dbReference type="PIRSF" id="PIRSF015592">
    <property type="entry name" value="Prld-crbxl_pptds"/>
    <property type="match status" value="1"/>
</dbReference>
<dbReference type="PRINTS" id="PR00706">
    <property type="entry name" value="PYROGLUPTASE"/>
</dbReference>
<dbReference type="SUPFAM" id="SSF53182">
    <property type="entry name" value="Pyrrolidone carboxyl peptidase (pyroglutamate aminopeptidase)"/>
    <property type="match status" value="1"/>
</dbReference>
<dbReference type="PROSITE" id="PS01334">
    <property type="entry name" value="PYRASE_CYS"/>
    <property type="match status" value="1"/>
</dbReference>
<dbReference type="PROSITE" id="PS01333">
    <property type="entry name" value="PYRASE_GLU"/>
    <property type="match status" value="1"/>
</dbReference>
<accession>Q4L9S3</accession>
<protein>
    <recommendedName>
        <fullName evidence="1">Pyrrolidone-carboxylate peptidase</fullName>
        <ecNumber evidence="1">3.4.19.3</ecNumber>
    </recommendedName>
    <alternativeName>
        <fullName evidence="1">5-oxoprolyl-peptidase</fullName>
    </alternativeName>
    <alternativeName>
        <fullName evidence="1">Pyroglutamyl-peptidase I</fullName>
        <shortName evidence="1">PGP-I</shortName>
        <shortName evidence="1">Pyrase</shortName>
    </alternativeName>
</protein>